<dbReference type="EC" id="2.1.1.186" evidence="1"/>
<dbReference type="EMBL" id="AM181176">
    <property type="protein sequence ID" value="CAY47792.1"/>
    <property type="molecule type" value="Genomic_DNA"/>
</dbReference>
<dbReference type="RefSeq" id="WP_012722834.1">
    <property type="nucleotide sequence ID" value="NC_012660.1"/>
</dbReference>
<dbReference type="SMR" id="C3K5G4"/>
<dbReference type="STRING" id="294.SRM1_03800"/>
<dbReference type="GeneID" id="93463154"/>
<dbReference type="eggNOG" id="COG2933">
    <property type="taxonomic scope" value="Bacteria"/>
</dbReference>
<dbReference type="HOGENOM" id="CLU_043780_0_0_6"/>
<dbReference type="OrthoDB" id="154490at2"/>
<dbReference type="GO" id="GO:0005737">
    <property type="term" value="C:cytoplasm"/>
    <property type="evidence" value="ECO:0007669"/>
    <property type="project" value="UniProtKB-SubCell"/>
</dbReference>
<dbReference type="GO" id="GO:0008757">
    <property type="term" value="F:S-adenosylmethionine-dependent methyltransferase activity"/>
    <property type="evidence" value="ECO:0007669"/>
    <property type="project" value="UniProtKB-UniRule"/>
</dbReference>
<dbReference type="GO" id="GO:0032259">
    <property type="term" value="P:methylation"/>
    <property type="evidence" value="ECO:0007669"/>
    <property type="project" value="UniProtKB-KW"/>
</dbReference>
<dbReference type="GO" id="GO:0006364">
    <property type="term" value="P:rRNA processing"/>
    <property type="evidence" value="ECO:0007669"/>
    <property type="project" value="UniProtKB-UniRule"/>
</dbReference>
<dbReference type="Gene3D" id="3.30.2300.20">
    <property type="match status" value="1"/>
</dbReference>
<dbReference type="Gene3D" id="3.30.70.2810">
    <property type="match status" value="1"/>
</dbReference>
<dbReference type="Gene3D" id="3.40.50.150">
    <property type="entry name" value="Vaccinia Virus protein VP39"/>
    <property type="match status" value="1"/>
</dbReference>
<dbReference type="HAMAP" id="MF_01551">
    <property type="entry name" value="23SrRNA_methyltr_M"/>
    <property type="match status" value="1"/>
</dbReference>
<dbReference type="InterPro" id="IPR040739">
    <property type="entry name" value="RlmM_FDX"/>
</dbReference>
<dbReference type="InterPro" id="IPR048646">
    <property type="entry name" value="RlmM_THUMP-like"/>
</dbReference>
<dbReference type="InterPro" id="IPR002877">
    <property type="entry name" value="RNA_MeTrfase_FtsJ_dom"/>
</dbReference>
<dbReference type="InterPro" id="IPR011224">
    <property type="entry name" value="rRNA_MeTrfase_M"/>
</dbReference>
<dbReference type="InterPro" id="IPR029063">
    <property type="entry name" value="SAM-dependent_MTases_sf"/>
</dbReference>
<dbReference type="NCBIfam" id="NF008734">
    <property type="entry name" value="PRK11760.1"/>
    <property type="match status" value="1"/>
</dbReference>
<dbReference type="PANTHER" id="PTHR37524">
    <property type="entry name" value="RIBOSOMAL RNA LARGE SUBUNIT METHYLTRANSFERASE M"/>
    <property type="match status" value="1"/>
</dbReference>
<dbReference type="PANTHER" id="PTHR37524:SF2">
    <property type="entry name" value="RIBOSOMAL RNA METHYLTRANSFERASE FTSJ DOMAIN-CONTAINING PROTEIN"/>
    <property type="match status" value="1"/>
</dbReference>
<dbReference type="Pfam" id="PF01728">
    <property type="entry name" value="FtsJ"/>
    <property type="match status" value="1"/>
</dbReference>
<dbReference type="Pfam" id="PF18125">
    <property type="entry name" value="RlmM_FDX"/>
    <property type="match status" value="1"/>
</dbReference>
<dbReference type="Pfam" id="PF21239">
    <property type="entry name" value="RLMM_N"/>
    <property type="match status" value="1"/>
</dbReference>
<dbReference type="PIRSF" id="PIRSF028774">
    <property type="entry name" value="UCP028774"/>
    <property type="match status" value="1"/>
</dbReference>
<dbReference type="SUPFAM" id="SSF53335">
    <property type="entry name" value="S-adenosyl-L-methionine-dependent methyltransferases"/>
    <property type="match status" value="1"/>
</dbReference>
<sequence>MNTLFMHCRPGFEGEVCSEIAEHAARLNVSGYAKAKTGSACAEFVCTEEDGAQRLMHGQRFAELIFPRQWARGVFIDLPETDRISVILAHLREFPVCGSLWLEMVDTNDGKELSNFCKKFEVHLRKALLNAGKLVDDPSKPRLLLTFKSGREVFMGLAESNNSAMWPMGIPRLKFPRDAPSRSTLKLEEAWHHFIPRDQWDERLHGDMTGVDLGAAPGGWTWQLVNRGMLVTAIDNGPMAESLMDTGLVQHLMADGFTFVPKQPVDWMVCDIVEKPARNAALLETWIGEGHCREAVVNLKLPMKQRYAEVKRLLERIEEGFKARGIRVEIGCKQLYHDREEVTCHLRRLETAKKTKAR</sequence>
<name>RLMM_PSEFS</name>
<protein>
    <recommendedName>
        <fullName evidence="1">Ribosomal RNA large subunit methyltransferase M</fullName>
        <ecNumber evidence="1">2.1.1.186</ecNumber>
    </recommendedName>
    <alternativeName>
        <fullName evidence="1">23S rRNA (cytidine2498-2'-O)-methyltransferase</fullName>
    </alternativeName>
    <alternativeName>
        <fullName evidence="1">23S rRNA 2'-O-ribose methyltransferase RlmM</fullName>
    </alternativeName>
</protein>
<reference key="1">
    <citation type="journal article" date="2009" name="Genome Biol.">
        <title>Genomic and genetic analyses of diversity and plant interactions of Pseudomonas fluorescens.</title>
        <authorList>
            <person name="Silby M.W."/>
            <person name="Cerdeno-Tarraga A.M."/>
            <person name="Vernikos G.S."/>
            <person name="Giddens S.R."/>
            <person name="Jackson R.W."/>
            <person name="Preston G.M."/>
            <person name="Zhang X.-X."/>
            <person name="Moon C.D."/>
            <person name="Gehrig S.M."/>
            <person name="Godfrey S.A.C."/>
            <person name="Knight C.G."/>
            <person name="Malone J.G."/>
            <person name="Robinson Z."/>
            <person name="Spiers A.J."/>
            <person name="Harris S."/>
            <person name="Challis G.L."/>
            <person name="Yaxley A.M."/>
            <person name="Harris D."/>
            <person name="Seeger K."/>
            <person name="Murphy L."/>
            <person name="Rutter S."/>
            <person name="Squares R."/>
            <person name="Quail M.A."/>
            <person name="Saunders E."/>
            <person name="Mavromatis K."/>
            <person name="Brettin T.S."/>
            <person name="Bentley S.D."/>
            <person name="Hothersall J."/>
            <person name="Stephens E."/>
            <person name="Thomas C.M."/>
            <person name="Parkhill J."/>
            <person name="Levy S.B."/>
            <person name="Rainey P.B."/>
            <person name="Thomson N.R."/>
        </authorList>
    </citation>
    <scope>NUCLEOTIDE SEQUENCE [LARGE SCALE GENOMIC DNA]</scope>
    <source>
        <strain>SBW25</strain>
    </source>
</reference>
<feature type="chain" id="PRO_1000215471" description="Ribosomal RNA large subunit methyltransferase M">
    <location>
        <begin position="1"/>
        <end position="358"/>
    </location>
</feature>
<feature type="active site" description="Proton acceptor" evidence="1">
    <location>
        <position position="300"/>
    </location>
</feature>
<feature type="binding site" evidence="1">
    <location>
        <position position="183"/>
    </location>
    <ligand>
        <name>S-adenosyl-L-methionine</name>
        <dbReference type="ChEBI" id="CHEBI:59789"/>
    </ligand>
</feature>
<feature type="binding site" evidence="1">
    <location>
        <begin position="216"/>
        <end position="219"/>
    </location>
    <ligand>
        <name>S-adenosyl-L-methionine</name>
        <dbReference type="ChEBI" id="CHEBI:59789"/>
    </ligand>
</feature>
<feature type="binding site" evidence="1">
    <location>
        <position position="235"/>
    </location>
    <ligand>
        <name>S-adenosyl-L-methionine</name>
        <dbReference type="ChEBI" id="CHEBI:59789"/>
    </ligand>
</feature>
<feature type="binding site" evidence="1">
    <location>
        <position position="255"/>
    </location>
    <ligand>
        <name>S-adenosyl-L-methionine</name>
        <dbReference type="ChEBI" id="CHEBI:59789"/>
    </ligand>
</feature>
<feature type="binding site" evidence="1">
    <location>
        <position position="271"/>
    </location>
    <ligand>
        <name>S-adenosyl-L-methionine</name>
        <dbReference type="ChEBI" id="CHEBI:59789"/>
    </ligand>
</feature>
<organism>
    <name type="scientific">Pseudomonas fluorescens (strain SBW25)</name>
    <dbReference type="NCBI Taxonomy" id="216595"/>
    <lineage>
        <taxon>Bacteria</taxon>
        <taxon>Pseudomonadati</taxon>
        <taxon>Pseudomonadota</taxon>
        <taxon>Gammaproteobacteria</taxon>
        <taxon>Pseudomonadales</taxon>
        <taxon>Pseudomonadaceae</taxon>
        <taxon>Pseudomonas</taxon>
    </lineage>
</organism>
<evidence type="ECO:0000255" key="1">
    <source>
        <dbReference type="HAMAP-Rule" id="MF_01551"/>
    </source>
</evidence>
<proteinExistence type="inferred from homology"/>
<keyword id="KW-0963">Cytoplasm</keyword>
<keyword id="KW-0489">Methyltransferase</keyword>
<keyword id="KW-0698">rRNA processing</keyword>
<keyword id="KW-0949">S-adenosyl-L-methionine</keyword>
<keyword id="KW-0808">Transferase</keyword>
<comment type="function">
    <text evidence="1">Catalyzes the 2'-O-methylation at nucleotide C2498 in 23S rRNA.</text>
</comment>
<comment type="catalytic activity">
    <reaction evidence="1">
        <text>cytidine(2498) in 23S rRNA + S-adenosyl-L-methionine = 2'-O-methylcytidine(2498) in 23S rRNA + S-adenosyl-L-homocysteine + H(+)</text>
        <dbReference type="Rhea" id="RHEA:42788"/>
        <dbReference type="Rhea" id="RHEA-COMP:10244"/>
        <dbReference type="Rhea" id="RHEA-COMP:10245"/>
        <dbReference type="ChEBI" id="CHEBI:15378"/>
        <dbReference type="ChEBI" id="CHEBI:57856"/>
        <dbReference type="ChEBI" id="CHEBI:59789"/>
        <dbReference type="ChEBI" id="CHEBI:74495"/>
        <dbReference type="ChEBI" id="CHEBI:82748"/>
        <dbReference type="EC" id="2.1.1.186"/>
    </reaction>
</comment>
<comment type="subunit">
    <text evidence="1">Monomer.</text>
</comment>
<comment type="subcellular location">
    <subcellularLocation>
        <location evidence="1">Cytoplasm</location>
    </subcellularLocation>
</comment>
<comment type="similarity">
    <text evidence="1">Belongs to the class I-like SAM-binding methyltransferase superfamily. RNA methyltransferase RlmE family. RlmM subfamily.</text>
</comment>
<gene>
    <name evidence="1" type="primary">rlmM</name>
    <name type="ordered locus">PFLU_1543</name>
</gene>
<accession>C3K5G4</accession>